<evidence type="ECO:0000250" key="1"/>
<evidence type="ECO:0000255" key="2"/>
<evidence type="ECO:0000305" key="3"/>
<sequence length="983" mass="108035">MRIFSFLFLLLLGILTGQGLVSGTDNGKTTDVTWDKYSLSVKGQRLFVFSGEFHYQRLPVPELWLDVFQKLRANGFNAISVYFFWSFHSASEGEFDFENGAHDIQRLFDYAKEAGLYVIARAGPYCNAETSAGGFALWAANGQMGNERTSDEAYYEKWRPWILEVGKIIAKNQITNGGPVILNQHENELVETTYDPNHTLVVYMKQIAQVFEEAGIVVPSSHNEKGMRGVSWSTDYHNVGGAVNIYGLDSYPGGLSCTNPNSGFNLVRTYHQWFQNYSFTQPSYLPEFEGGWFQPWGGSFYDTCATELSPEFPDVYYKNNIGSRVTLHSIYMTYGGTNWGHSAAPVVYTSYDYAAPLRETREIRDKLKQTKLIGLFTRVSKDLLKTYMEGNGTGYTSDSSIYTWSLRNPDTNAGFYVLAHSTSSTRDVTTFTLNVTTSAGAISIPDIELNGRQSKIIVTDYNFGTNSTLLFSSAEVLTYANLDVNVLVFYLNVGQKGTFVFKDEPKLAFQTYGNSNLTTSESSYGTQYSYTQGKGVTAVKFSNGVLAYFLDKESAWNFFAPPTTSSPQVAPNEHILVQGPYLVRGASVNHGTVEITGDNANTTSIEVYTGNSQVKKIKWNGKTIETRKTAYGSLIGTAPGAEDVKIQLPSLDSWKAQDTLPEIQPDYDDSKWTVCNKTTSVNAIAPLSLPVLYSGDYGYHAGTKVYRGRFDGRNVTGANVTVQNGAAAGWAAWVNGQYAGGSAGSPNLAATSAVLTFNSSSLKDQDNVLTVVTDYTGHDQNSVRPKGTQNPRGILGATLIGGGNFTSWRIQGNAGGEKNIDPVRGPMNEGGLYGERMGWHLPGYKVPKSASKSSPLDGVSGAEGRFYTTTFKLKLDKDLDVPIGLQLGAPEGTKAVVQVFMNGYQFGHYLPHTGPQSLFPFPPGVINNRGENTLAISMWALTDAGAKLDKVELVAYGKYRSGFDFNQDWGYLQPGWKDRSQYA</sequence>
<proteinExistence type="inferred from homology"/>
<feature type="signal peptide" evidence="2">
    <location>
        <begin position="1"/>
        <end position="23"/>
    </location>
</feature>
<feature type="chain" id="PRO_0000395235" description="Probable beta-galactosidase C">
    <location>
        <begin position="24"/>
        <end position="983"/>
    </location>
</feature>
<feature type="active site" description="Proton donor" evidence="2">
    <location>
        <position position="188"/>
    </location>
</feature>
<feature type="active site" description="Nucleophile" evidence="2">
    <location>
        <position position="287"/>
    </location>
</feature>
<feature type="binding site" evidence="1">
    <location>
        <position position="82"/>
    </location>
    <ligand>
        <name>substrate</name>
    </ligand>
</feature>
<feature type="binding site" evidence="1">
    <location>
        <position position="127"/>
    </location>
    <ligand>
        <name>substrate</name>
    </ligand>
</feature>
<feature type="binding site" evidence="1">
    <location>
        <position position="128"/>
    </location>
    <ligand>
        <name>substrate</name>
    </ligand>
</feature>
<feature type="binding site" evidence="1">
    <location>
        <position position="129"/>
    </location>
    <ligand>
        <name>substrate</name>
    </ligand>
</feature>
<feature type="binding site" evidence="1">
    <location>
        <position position="187"/>
    </location>
    <ligand>
        <name>substrate</name>
    </ligand>
</feature>
<feature type="binding site" evidence="1">
    <location>
        <position position="251"/>
    </location>
    <ligand>
        <name>substrate</name>
    </ligand>
</feature>
<feature type="binding site" evidence="1">
    <location>
        <position position="353"/>
    </location>
    <ligand>
        <name>substrate</name>
    </ligand>
</feature>
<feature type="glycosylation site" description="N-linked (GlcNAc...) asparagine" evidence="2">
    <location>
        <position position="197"/>
    </location>
</feature>
<feature type="glycosylation site" description="N-linked (GlcNAc...) asparagine" evidence="2">
    <location>
        <position position="276"/>
    </location>
</feature>
<feature type="glycosylation site" description="N-linked (GlcNAc...) asparagine" evidence="2">
    <location>
        <position position="391"/>
    </location>
</feature>
<feature type="glycosylation site" description="N-linked (GlcNAc...) asparagine" evidence="2">
    <location>
        <position position="434"/>
    </location>
</feature>
<feature type="glycosylation site" description="N-linked (GlcNAc...) asparagine" evidence="2">
    <location>
        <position position="466"/>
    </location>
</feature>
<feature type="glycosylation site" description="N-linked (GlcNAc...) asparagine" evidence="2">
    <location>
        <position position="516"/>
    </location>
</feature>
<feature type="glycosylation site" description="N-linked (GlcNAc...) asparagine" evidence="2">
    <location>
        <position position="601"/>
    </location>
</feature>
<feature type="glycosylation site" description="N-linked (GlcNAc...) asparagine" evidence="2">
    <location>
        <position position="676"/>
    </location>
</feature>
<feature type="glycosylation site" description="N-linked (GlcNAc...) asparagine" evidence="2">
    <location>
        <position position="714"/>
    </location>
</feature>
<feature type="glycosylation site" description="N-linked (GlcNAc...) asparagine" evidence="2">
    <location>
        <position position="719"/>
    </location>
</feature>
<feature type="glycosylation site" description="N-linked (GlcNAc...) asparagine" evidence="2">
    <location>
        <position position="758"/>
    </location>
</feature>
<feature type="glycosylation site" description="N-linked (GlcNAc...) asparagine" evidence="2">
    <location>
        <position position="804"/>
    </location>
</feature>
<feature type="disulfide bond" evidence="1">
    <location>
        <begin position="257"/>
        <end position="304"/>
    </location>
</feature>
<gene>
    <name type="primary">lacC</name>
    <name type="ORF">AFUB_072590</name>
</gene>
<name>BGALC_ASPFC</name>
<comment type="function">
    <text evidence="1">Cleaves beta-linked terminal galactosyl residues from gangliosides, glycoproteins, and glycosaminoglycans.</text>
</comment>
<comment type="catalytic activity">
    <reaction>
        <text>Hydrolysis of terminal non-reducing beta-D-galactose residues in beta-D-galactosides.</text>
        <dbReference type="EC" id="3.2.1.23"/>
    </reaction>
</comment>
<comment type="subcellular location">
    <subcellularLocation>
        <location evidence="1">Secreted</location>
    </subcellularLocation>
</comment>
<comment type="similarity">
    <text evidence="3">Belongs to the glycosyl hydrolase 35 family.</text>
</comment>
<keyword id="KW-0119">Carbohydrate metabolism</keyword>
<keyword id="KW-1015">Disulfide bond</keyword>
<keyword id="KW-0325">Glycoprotein</keyword>
<keyword id="KW-0326">Glycosidase</keyword>
<keyword id="KW-0378">Hydrolase</keyword>
<keyword id="KW-0624">Polysaccharide degradation</keyword>
<keyword id="KW-0964">Secreted</keyword>
<keyword id="KW-0732">Signal</keyword>
<dbReference type="EC" id="3.2.1.23"/>
<dbReference type="EMBL" id="DS499599">
    <property type="protein sequence ID" value="EDP49233.1"/>
    <property type="molecule type" value="Genomic_DNA"/>
</dbReference>
<dbReference type="SMR" id="B0Y752"/>
<dbReference type="GlyCosmos" id="B0Y752">
    <property type="glycosylation" value="12 sites, No reported glycans"/>
</dbReference>
<dbReference type="EnsemblFungi" id="EDP49233">
    <property type="protein sequence ID" value="EDP49233"/>
    <property type="gene ID" value="AFUB_072590"/>
</dbReference>
<dbReference type="VEuPathDB" id="FungiDB:AFUB_072590"/>
<dbReference type="HOGENOM" id="CLU_005732_2_1_1"/>
<dbReference type="OrthoDB" id="39863at5052"/>
<dbReference type="PhylomeDB" id="B0Y752"/>
<dbReference type="Proteomes" id="UP000001699">
    <property type="component" value="Unassembled WGS sequence"/>
</dbReference>
<dbReference type="GO" id="GO:0005576">
    <property type="term" value="C:extracellular region"/>
    <property type="evidence" value="ECO:0007669"/>
    <property type="project" value="UniProtKB-SubCell"/>
</dbReference>
<dbReference type="GO" id="GO:0004565">
    <property type="term" value="F:beta-galactosidase activity"/>
    <property type="evidence" value="ECO:0007669"/>
    <property type="project" value="UniProtKB-EC"/>
</dbReference>
<dbReference type="GO" id="GO:0000272">
    <property type="term" value="P:polysaccharide catabolic process"/>
    <property type="evidence" value="ECO:0007669"/>
    <property type="project" value="UniProtKB-KW"/>
</dbReference>
<dbReference type="FunFam" id="2.102.20.10:FF:000001">
    <property type="entry name" value="Beta-galactosidase A"/>
    <property type="match status" value="1"/>
</dbReference>
<dbReference type="FunFam" id="2.60.120.260:FF:000065">
    <property type="entry name" value="Beta-galactosidase A"/>
    <property type="match status" value="1"/>
</dbReference>
<dbReference type="FunFam" id="2.60.390.10:FF:000001">
    <property type="entry name" value="Beta-galactosidase A"/>
    <property type="match status" value="1"/>
</dbReference>
<dbReference type="FunFam" id="3.20.20.80:FF:000040">
    <property type="entry name" value="Beta-galactosidase A"/>
    <property type="match status" value="1"/>
</dbReference>
<dbReference type="FunFam" id="2.60.120.260:FF:000144">
    <property type="entry name" value="Probable beta-galactosidase C"/>
    <property type="match status" value="1"/>
</dbReference>
<dbReference type="Gene3D" id="2.102.20.10">
    <property type="entry name" value="Beta-galactosidase, domain 2"/>
    <property type="match status" value="1"/>
</dbReference>
<dbReference type="Gene3D" id="2.60.390.10">
    <property type="entry name" value="Beta-galactosidase, domain 3"/>
    <property type="match status" value="1"/>
</dbReference>
<dbReference type="Gene3D" id="2.60.120.260">
    <property type="entry name" value="Galactose-binding domain-like"/>
    <property type="match status" value="2"/>
</dbReference>
<dbReference type="Gene3D" id="3.20.20.80">
    <property type="entry name" value="Glycosidases"/>
    <property type="match status" value="1"/>
</dbReference>
<dbReference type="InterPro" id="IPR018954">
    <property type="entry name" value="Betagal_dom2"/>
</dbReference>
<dbReference type="InterPro" id="IPR037110">
    <property type="entry name" value="Betagal_dom2_sf"/>
</dbReference>
<dbReference type="InterPro" id="IPR025972">
    <property type="entry name" value="BetaGal_dom3"/>
</dbReference>
<dbReference type="InterPro" id="IPR036833">
    <property type="entry name" value="BetaGal_dom3_sf"/>
</dbReference>
<dbReference type="InterPro" id="IPR025300">
    <property type="entry name" value="BetaGal_jelly_roll_dom"/>
</dbReference>
<dbReference type="InterPro" id="IPR008979">
    <property type="entry name" value="Galactose-bd-like_sf"/>
</dbReference>
<dbReference type="InterPro" id="IPR031330">
    <property type="entry name" value="Gly_Hdrlase_35_cat"/>
</dbReference>
<dbReference type="InterPro" id="IPR001944">
    <property type="entry name" value="Glycoside_Hdrlase_35"/>
</dbReference>
<dbReference type="InterPro" id="IPR017853">
    <property type="entry name" value="Glycoside_hydrolase_SF"/>
</dbReference>
<dbReference type="PANTHER" id="PTHR23421">
    <property type="entry name" value="BETA-GALACTOSIDASE RELATED"/>
    <property type="match status" value="1"/>
</dbReference>
<dbReference type="Pfam" id="PF13364">
    <property type="entry name" value="BetaGal_ABD2"/>
    <property type="match status" value="2"/>
</dbReference>
<dbReference type="Pfam" id="PF10435">
    <property type="entry name" value="BetaGal_dom2"/>
    <property type="match status" value="1"/>
</dbReference>
<dbReference type="Pfam" id="PF13363">
    <property type="entry name" value="BetaGal_dom3"/>
    <property type="match status" value="1"/>
</dbReference>
<dbReference type="Pfam" id="PF01301">
    <property type="entry name" value="Glyco_hydro_35"/>
    <property type="match status" value="1"/>
</dbReference>
<dbReference type="PRINTS" id="PR00742">
    <property type="entry name" value="GLHYDRLASE35"/>
</dbReference>
<dbReference type="SMART" id="SM01029">
    <property type="entry name" value="BetaGal_dom2"/>
    <property type="match status" value="1"/>
</dbReference>
<dbReference type="SUPFAM" id="SSF51445">
    <property type="entry name" value="(Trans)glycosidases"/>
    <property type="match status" value="1"/>
</dbReference>
<dbReference type="SUPFAM" id="SSF117100">
    <property type="entry name" value="Beta-galactosidase LacA, domain 3"/>
    <property type="match status" value="1"/>
</dbReference>
<dbReference type="SUPFAM" id="SSF49785">
    <property type="entry name" value="Galactose-binding domain-like"/>
    <property type="match status" value="2"/>
</dbReference>
<dbReference type="SUPFAM" id="SSF51011">
    <property type="entry name" value="Glycosyl hydrolase domain"/>
    <property type="match status" value="1"/>
</dbReference>
<protein>
    <recommendedName>
        <fullName>Probable beta-galactosidase C</fullName>
        <ecNumber>3.2.1.23</ecNumber>
    </recommendedName>
    <alternativeName>
        <fullName>Lactase C</fullName>
    </alternativeName>
</protein>
<organism>
    <name type="scientific">Aspergillus fumigatus (strain CBS 144.89 / FGSC A1163 / CEA10)</name>
    <name type="common">Neosartorya fumigata</name>
    <dbReference type="NCBI Taxonomy" id="451804"/>
    <lineage>
        <taxon>Eukaryota</taxon>
        <taxon>Fungi</taxon>
        <taxon>Dikarya</taxon>
        <taxon>Ascomycota</taxon>
        <taxon>Pezizomycotina</taxon>
        <taxon>Eurotiomycetes</taxon>
        <taxon>Eurotiomycetidae</taxon>
        <taxon>Eurotiales</taxon>
        <taxon>Aspergillaceae</taxon>
        <taxon>Aspergillus</taxon>
        <taxon>Aspergillus subgen. Fumigati</taxon>
    </lineage>
</organism>
<accession>B0Y752</accession>
<reference key="1">
    <citation type="journal article" date="2008" name="PLoS Genet.">
        <title>Genomic islands in the pathogenic filamentous fungus Aspergillus fumigatus.</title>
        <authorList>
            <person name="Fedorova N.D."/>
            <person name="Khaldi N."/>
            <person name="Joardar V.S."/>
            <person name="Maiti R."/>
            <person name="Amedeo P."/>
            <person name="Anderson M.J."/>
            <person name="Crabtree J."/>
            <person name="Silva J.C."/>
            <person name="Badger J.H."/>
            <person name="Albarraq A."/>
            <person name="Angiuoli S."/>
            <person name="Bussey H."/>
            <person name="Bowyer P."/>
            <person name="Cotty P.J."/>
            <person name="Dyer P.S."/>
            <person name="Egan A."/>
            <person name="Galens K."/>
            <person name="Fraser-Liggett C.M."/>
            <person name="Haas B.J."/>
            <person name="Inman J.M."/>
            <person name="Kent R."/>
            <person name="Lemieux S."/>
            <person name="Malavazi I."/>
            <person name="Orvis J."/>
            <person name="Roemer T."/>
            <person name="Ronning C.M."/>
            <person name="Sundaram J.P."/>
            <person name="Sutton G."/>
            <person name="Turner G."/>
            <person name="Venter J.C."/>
            <person name="White O.R."/>
            <person name="Whitty B.R."/>
            <person name="Youngman P."/>
            <person name="Wolfe K.H."/>
            <person name="Goldman G.H."/>
            <person name="Wortman J.R."/>
            <person name="Jiang B."/>
            <person name="Denning D.W."/>
            <person name="Nierman W.C."/>
        </authorList>
    </citation>
    <scope>NUCLEOTIDE SEQUENCE [LARGE SCALE GENOMIC DNA]</scope>
    <source>
        <strain>CBS 144.89 / FGSC A1163 / CEA10</strain>
    </source>
</reference>